<protein>
    <recommendedName>
        <fullName evidence="1">6,7-dimethyl-8-ribityllumazine synthase 1</fullName>
        <shortName evidence="1">DMRL synthase 1</shortName>
        <shortName evidence="1">LS 1</shortName>
        <shortName evidence="1">Lumazine synthase 1</shortName>
        <ecNumber evidence="1">2.5.1.78</ecNumber>
    </recommendedName>
</protein>
<feature type="chain" id="PRO_0000134798" description="6,7-dimethyl-8-ribityllumazine synthase 1">
    <location>
        <begin position="1"/>
        <end position="163"/>
    </location>
</feature>
<feature type="active site" description="Proton donor" evidence="1">
    <location>
        <position position="95"/>
    </location>
</feature>
<feature type="binding site" evidence="1">
    <location>
        <position position="27"/>
    </location>
    <ligand>
        <name>5-amino-6-(D-ribitylamino)uracil</name>
        <dbReference type="ChEBI" id="CHEBI:15934"/>
    </ligand>
</feature>
<feature type="binding site" evidence="1">
    <location>
        <begin position="58"/>
        <end position="60"/>
    </location>
    <ligand>
        <name>5-amino-6-(D-ribitylamino)uracil</name>
        <dbReference type="ChEBI" id="CHEBI:15934"/>
    </ligand>
</feature>
<feature type="binding site" evidence="1">
    <location>
        <begin position="87"/>
        <end position="89"/>
    </location>
    <ligand>
        <name>5-amino-6-(D-ribitylamino)uracil</name>
        <dbReference type="ChEBI" id="CHEBI:15934"/>
    </ligand>
</feature>
<feature type="binding site" evidence="1">
    <location>
        <begin position="92"/>
        <end position="93"/>
    </location>
    <ligand>
        <name>(2S)-2-hydroxy-3-oxobutyl phosphate</name>
        <dbReference type="ChEBI" id="CHEBI:58830"/>
    </ligand>
</feature>
<feature type="binding site" evidence="1">
    <location>
        <position position="120"/>
    </location>
    <ligand>
        <name>5-amino-6-(D-ribitylamino)uracil</name>
        <dbReference type="ChEBI" id="CHEBI:15934"/>
    </ligand>
</feature>
<feature type="binding site" evidence="1">
    <location>
        <position position="134"/>
    </location>
    <ligand>
        <name>(2S)-2-hydroxy-3-oxobutyl phosphate</name>
        <dbReference type="ChEBI" id="CHEBI:58830"/>
    </ligand>
</feature>
<comment type="function">
    <text evidence="1">Catalyzes the formation of 6,7-dimethyl-8-ribityllumazine by condensation of 5-amino-6-(D-ribitylamino)uracil with 3,4-dihydroxy-2-butanone 4-phosphate. This is the penultimate step in the biosynthesis of riboflavin.</text>
</comment>
<comment type="catalytic activity">
    <reaction evidence="1">
        <text>(2S)-2-hydroxy-3-oxobutyl phosphate + 5-amino-6-(D-ribitylamino)uracil = 6,7-dimethyl-8-(1-D-ribityl)lumazine + phosphate + 2 H2O + H(+)</text>
        <dbReference type="Rhea" id="RHEA:26152"/>
        <dbReference type="ChEBI" id="CHEBI:15377"/>
        <dbReference type="ChEBI" id="CHEBI:15378"/>
        <dbReference type="ChEBI" id="CHEBI:15934"/>
        <dbReference type="ChEBI" id="CHEBI:43474"/>
        <dbReference type="ChEBI" id="CHEBI:58201"/>
        <dbReference type="ChEBI" id="CHEBI:58830"/>
        <dbReference type="EC" id="2.5.1.78"/>
    </reaction>
</comment>
<comment type="pathway">
    <text evidence="1">Cofactor biosynthesis; riboflavin biosynthesis; riboflavin from 2-hydroxy-3-oxobutyl phosphate and 5-amino-6-(D-ribitylamino)uracil: step 1/2.</text>
</comment>
<comment type="similarity">
    <text evidence="1">Belongs to the DMRL synthase family.</text>
</comment>
<proteinExistence type="inferred from homology"/>
<accession>P61726</accession>
<reference key="1">
    <citation type="journal article" date="2004" name="Nat. Biotechnol.">
        <title>Complete genome sequence of the metabolically versatile photosynthetic bacterium Rhodopseudomonas palustris.</title>
        <authorList>
            <person name="Larimer F.W."/>
            <person name="Chain P."/>
            <person name="Hauser L."/>
            <person name="Lamerdin J.E."/>
            <person name="Malfatti S."/>
            <person name="Do L."/>
            <person name="Land M.L."/>
            <person name="Pelletier D.A."/>
            <person name="Beatty J.T."/>
            <person name="Lang A.S."/>
            <person name="Tabita F.R."/>
            <person name="Gibson J.L."/>
            <person name="Hanson T.E."/>
            <person name="Bobst C."/>
            <person name="Torres y Torres J.L."/>
            <person name="Peres C."/>
            <person name="Harrison F.H."/>
            <person name="Gibson J."/>
            <person name="Harwood C.S."/>
        </authorList>
    </citation>
    <scope>NUCLEOTIDE SEQUENCE [LARGE SCALE GENOMIC DNA]</scope>
    <source>
        <strain>ATCC BAA-98 / CGA009</strain>
    </source>
</reference>
<organism>
    <name type="scientific">Rhodopseudomonas palustris (strain ATCC BAA-98 / CGA009)</name>
    <dbReference type="NCBI Taxonomy" id="258594"/>
    <lineage>
        <taxon>Bacteria</taxon>
        <taxon>Pseudomonadati</taxon>
        <taxon>Pseudomonadota</taxon>
        <taxon>Alphaproteobacteria</taxon>
        <taxon>Hyphomicrobiales</taxon>
        <taxon>Nitrobacteraceae</taxon>
        <taxon>Rhodopseudomonas</taxon>
    </lineage>
</organism>
<gene>
    <name evidence="1" type="primary">ribH1</name>
    <name type="synonym">ribE</name>
    <name type="ordered locus">RPA2728</name>
</gene>
<keyword id="KW-0686">Riboflavin biosynthesis</keyword>
<keyword id="KW-0808">Transferase</keyword>
<sequence length="163" mass="17088">MADARRAPLKDQTDVSGARVLIVEARFYDDIQDALLEGAVAELKAAGATHDVLTVPGALEIPAAVAIAIDSAEAAGKPYDAAIALGCVVRGETIHFEIVSMESARALMDLSVARKFPLGNGIITVNTDEQAWARAKPGDLNKGGDAARAALAMLRIKRRLAKA</sequence>
<name>RISB1_RHOPA</name>
<evidence type="ECO:0000255" key="1">
    <source>
        <dbReference type="HAMAP-Rule" id="MF_00178"/>
    </source>
</evidence>
<dbReference type="EC" id="2.5.1.78" evidence="1"/>
<dbReference type="EMBL" id="BX572601">
    <property type="protein sequence ID" value="CAE28170.1"/>
    <property type="molecule type" value="Genomic_DNA"/>
</dbReference>
<dbReference type="SMR" id="P61726"/>
<dbReference type="STRING" id="258594.RPA2728"/>
<dbReference type="eggNOG" id="COG0054">
    <property type="taxonomic scope" value="Bacteria"/>
</dbReference>
<dbReference type="HOGENOM" id="CLU_089358_1_2_5"/>
<dbReference type="PhylomeDB" id="P61726"/>
<dbReference type="UniPathway" id="UPA00275">
    <property type="reaction ID" value="UER00404"/>
</dbReference>
<dbReference type="GO" id="GO:0005829">
    <property type="term" value="C:cytosol"/>
    <property type="evidence" value="ECO:0007669"/>
    <property type="project" value="TreeGrafter"/>
</dbReference>
<dbReference type="GO" id="GO:0009349">
    <property type="term" value="C:riboflavin synthase complex"/>
    <property type="evidence" value="ECO:0007669"/>
    <property type="project" value="InterPro"/>
</dbReference>
<dbReference type="GO" id="GO:0000906">
    <property type="term" value="F:6,7-dimethyl-8-ribityllumazine synthase activity"/>
    <property type="evidence" value="ECO:0007669"/>
    <property type="project" value="UniProtKB-UniRule"/>
</dbReference>
<dbReference type="GO" id="GO:0009231">
    <property type="term" value="P:riboflavin biosynthetic process"/>
    <property type="evidence" value="ECO:0007669"/>
    <property type="project" value="UniProtKB-UniRule"/>
</dbReference>
<dbReference type="CDD" id="cd09209">
    <property type="entry name" value="Lumazine_synthase-I"/>
    <property type="match status" value="1"/>
</dbReference>
<dbReference type="Gene3D" id="3.40.50.960">
    <property type="entry name" value="Lumazine/riboflavin synthase"/>
    <property type="match status" value="1"/>
</dbReference>
<dbReference type="HAMAP" id="MF_00178">
    <property type="entry name" value="Lumazine_synth"/>
    <property type="match status" value="1"/>
</dbReference>
<dbReference type="InterPro" id="IPR034964">
    <property type="entry name" value="LS"/>
</dbReference>
<dbReference type="InterPro" id="IPR002180">
    <property type="entry name" value="LS/RS"/>
</dbReference>
<dbReference type="InterPro" id="IPR036467">
    <property type="entry name" value="LS/RS_sf"/>
</dbReference>
<dbReference type="NCBIfam" id="TIGR00114">
    <property type="entry name" value="lumazine-synth"/>
    <property type="match status" value="1"/>
</dbReference>
<dbReference type="PANTHER" id="PTHR21058:SF0">
    <property type="entry name" value="6,7-DIMETHYL-8-RIBITYLLUMAZINE SYNTHASE"/>
    <property type="match status" value="1"/>
</dbReference>
<dbReference type="PANTHER" id="PTHR21058">
    <property type="entry name" value="6,7-DIMETHYL-8-RIBITYLLUMAZINE SYNTHASE DMRL SYNTHASE LUMAZINE SYNTHASE"/>
    <property type="match status" value="1"/>
</dbReference>
<dbReference type="Pfam" id="PF00885">
    <property type="entry name" value="DMRL_synthase"/>
    <property type="match status" value="1"/>
</dbReference>
<dbReference type="SUPFAM" id="SSF52121">
    <property type="entry name" value="Lumazine synthase"/>
    <property type="match status" value="1"/>
</dbReference>